<evidence type="ECO:0000250" key="1"/>
<evidence type="ECO:0000305" key="2"/>
<comment type="catalytic activity">
    <reaction>
        <text>L-glutamate + acetyl-CoA = N-acetyl-L-glutamate + CoA + H(+)</text>
        <dbReference type="Rhea" id="RHEA:24292"/>
        <dbReference type="ChEBI" id="CHEBI:15378"/>
        <dbReference type="ChEBI" id="CHEBI:29985"/>
        <dbReference type="ChEBI" id="CHEBI:44337"/>
        <dbReference type="ChEBI" id="CHEBI:57287"/>
        <dbReference type="ChEBI" id="CHEBI:57288"/>
        <dbReference type="EC" id="2.3.1.1"/>
    </reaction>
</comment>
<comment type="pathway">
    <text>Amino-acid biosynthesis; L-arginine biosynthesis; N(2)-acetyl-L-ornithine from L-glutamate: step 1/4.</text>
</comment>
<comment type="subcellular location">
    <subcellularLocation>
        <location evidence="1">Cytoplasm</location>
    </subcellularLocation>
</comment>
<comment type="miscellaneous">
    <text>In bacteria which possess the bifunctional enzyme ornithine acetyltransferase/N-acetylglutamate synthase (ArgJ), ArgA fulfills an anaplerotic role.</text>
</comment>
<comment type="similarity">
    <text evidence="2">Belongs to the acetyltransferase family. ArgA subfamily.</text>
</comment>
<protein>
    <recommendedName>
        <fullName>Amino-acid acetyltransferase</fullName>
        <ecNumber>2.3.1.1</ecNumber>
    </recommendedName>
    <alternativeName>
        <fullName>N-acetylglutamate synthase</fullName>
        <shortName>AGS</shortName>
        <shortName>NAGS</shortName>
    </alternativeName>
</protein>
<name>ARGA_SHEON</name>
<keyword id="KW-0012">Acyltransferase</keyword>
<keyword id="KW-0028">Amino-acid biosynthesis</keyword>
<keyword id="KW-0055">Arginine biosynthesis</keyword>
<keyword id="KW-0963">Cytoplasm</keyword>
<keyword id="KW-1185">Reference proteome</keyword>
<keyword id="KW-0808">Transferase</keyword>
<reference key="1">
    <citation type="journal article" date="2002" name="Nat. Biotechnol.">
        <title>Genome sequence of the dissimilatory metal ion-reducing bacterium Shewanella oneidensis.</title>
        <authorList>
            <person name="Heidelberg J.F."/>
            <person name="Paulsen I.T."/>
            <person name="Nelson K.E."/>
            <person name="Gaidos E.J."/>
            <person name="Nelson W.C."/>
            <person name="Read T.D."/>
            <person name="Eisen J.A."/>
            <person name="Seshadri R."/>
            <person name="Ward N.L."/>
            <person name="Methe B.A."/>
            <person name="Clayton R.A."/>
            <person name="Meyer T."/>
            <person name="Tsapin A."/>
            <person name="Scott J."/>
            <person name="Beanan M.J."/>
            <person name="Brinkac L.M."/>
            <person name="Daugherty S.C."/>
            <person name="DeBoy R.T."/>
            <person name="Dodson R.J."/>
            <person name="Durkin A.S."/>
            <person name="Haft D.H."/>
            <person name="Kolonay J.F."/>
            <person name="Madupu R."/>
            <person name="Peterson J.D."/>
            <person name="Umayam L.A."/>
            <person name="White O."/>
            <person name="Wolf A.M."/>
            <person name="Vamathevan J.J."/>
            <person name="Weidman J.F."/>
            <person name="Impraim M."/>
            <person name="Lee K."/>
            <person name="Berry K.J."/>
            <person name="Lee C."/>
            <person name="Mueller J."/>
            <person name="Khouri H.M."/>
            <person name="Gill J."/>
            <person name="Utterback T.R."/>
            <person name="McDonald L.A."/>
            <person name="Feldblyum T.V."/>
            <person name="Smith H.O."/>
            <person name="Venter J.C."/>
            <person name="Nealson K.H."/>
            <person name="Fraser C.M."/>
        </authorList>
    </citation>
    <scope>NUCLEOTIDE SEQUENCE [LARGE SCALE GENOMIC DNA]</scope>
    <source>
        <strain>ATCC 700550 / JCM 31522 / CIP 106686 / LMG 19005 / NCIMB 14063 / MR-1</strain>
    </source>
</reference>
<organism>
    <name type="scientific">Shewanella oneidensis (strain ATCC 700550 / JCM 31522 / CIP 106686 / LMG 19005 / NCIMB 14063 / MR-1)</name>
    <dbReference type="NCBI Taxonomy" id="211586"/>
    <lineage>
        <taxon>Bacteria</taxon>
        <taxon>Pseudomonadati</taxon>
        <taxon>Pseudomonadota</taxon>
        <taxon>Gammaproteobacteria</taxon>
        <taxon>Alteromonadales</taxon>
        <taxon>Shewanellaceae</taxon>
        <taxon>Shewanella</taxon>
    </lineage>
</organism>
<feature type="chain" id="PRO_0000186806" description="Amino-acid acetyltransferase">
    <location>
        <begin position="1"/>
        <end position="445"/>
    </location>
</feature>
<feature type="domain" description="N-acetyltransferase">
    <location>
        <begin position="299"/>
        <end position="445"/>
    </location>
</feature>
<proteinExistence type="inferred from homology"/>
<gene>
    <name type="primary">argA</name>
    <name type="ordered locus">SO_4245</name>
</gene>
<sequence length="445" mass="48937">MRCKQRVRTTELVDGFRHSAPYVNAHRGKTFVVMLGGEALAQNQFRGILNDVALLHSLGIKVVLVYGARPQIDAALAANGIEPAYHDGVRITDEDSLKVIKQVAGALQFDITARLSMSLSNTPMQGAQINLVSGNFVIAQPLGVDNGVDFCLSGKVRRIDAQGLKRQLDNHCIVLMGPIAASVTGESFNLTAEEIATQVAIKLKADKMIGFSSQNGILDRNGDVIAELMPNDAQKILNKLAEQGSACIGTMAFLKASIDACRNGVPRCHLVSYLDDGALLQELFSREGIGTQIVTESAERLRRASISDIGGILNLIRPLEEQGILVRRSREQLEIEIEQFMLIERDGLVIGCAALYPFEEDNAGEFACLVVHPDYRDADRGSLLLKNIIGQARSRGYSRLFALTTRSIHWFLEHGFVIEDVDALPQKKKQLYNYQRRSKILALDL</sequence>
<dbReference type="EC" id="2.3.1.1"/>
<dbReference type="EMBL" id="AE014299">
    <property type="protein sequence ID" value="AAN57216.1"/>
    <property type="molecule type" value="Genomic_DNA"/>
</dbReference>
<dbReference type="RefSeq" id="NP_719772.1">
    <property type="nucleotide sequence ID" value="NC_004347.2"/>
</dbReference>
<dbReference type="SMR" id="P59292"/>
<dbReference type="STRING" id="211586.SO_4245"/>
<dbReference type="PaxDb" id="211586-SO_4245"/>
<dbReference type="KEGG" id="son:SO_4245"/>
<dbReference type="PATRIC" id="fig|211586.12.peg.4104"/>
<dbReference type="eggNOG" id="COG0548">
    <property type="taxonomic scope" value="Bacteria"/>
</dbReference>
<dbReference type="eggNOG" id="COG1246">
    <property type="taxonomic scope" value="Bacteria"/>
</dbReference>
<dbReference type="HOGENOM" id="CLU_024773_0_0_6"/>
<dbReference type="OrthoDB" id="9802238at2"/>
<dbReference type="PhylomeDB" id="P59292"/>
<dbReference type="BioCyc" id="SONE211586:G1GMP-3921-MONOMER"/>
<dbReference type="UniPathway" id="UPA00068">
    <property type="reaction ID" value="UER00106"/>
</dbReference>
<dbReference type="Proteomes" id="UP000008186">
    <property type="component" value="Chromosome"/>
</dbReference>
<dbReference type="GO" id="GO:0005737">
    <property type="term" value="C:cytoplasm"/>
    <property type="evidence" value="ECO:0007669"/>
    <property type="project" value="UniProtKB-SubCell"/>
</dbReference>
<dbReference type="GO" id="GO:0004042">
    <property type="term" value="F:L-glutamate N-acetyltransferase activity"/>
    <property type="evidence" value="ECO:0007669"/>
    <property type="project" value="UniProtKB-UniRule"/>
</dbReference>
<dbReference type="GO" id="GO:0006526">
    <property type="term" value="P:L-arginine biosynthetic process"/>
    <property type="evidence" value="ECO:0007669"/>
    <property type="project" value="UniProtKB-UniRule"/>
</dbReference>
<dbReference type="CDD" id="cd04237">
    <property type="entry name" value="AAK_NAGS-ABP"/>
    <property type="match status" value="1"/>
</dbReference>
<dbReference type="CDD" id="cd04301">
    <property type="entry name" value="NAT_SF"/>
    <property type="match status" value="1"/>
</dbReference>
<dbReference type="FunFam" id="3.40.1160.10:FF:000005">
    <property type="entry name" value="Amino-acid acetyltransferase"/>
    <property type="match status" value="1"/>
</dbReference>
<dbReference type="Gene3D" id="3.40.630.30">
    <property type="match status" value="1"/>
</dbReference>
<dbReference type="Gene3D" id="3.40.1160.10">
    <property type="entry name" value="Acetylglutamate kinase-like"/>
    <property type="match status" value="1"/>
</dbReference>
<dbReference type="HAMAP" id="MF_01105">
    <property type="entry name" value="N_acetyl_glu_synth"/>
    <property type="match status" value="1"/>
</dbReference>
<dbReference type="InterPro" id="IPR036393">
    <property type="entry name" value="AceGlu_kinase-like_sf"/>
</dbReference>
<dbReference type="InterPro" id="IPR016181">
    <property type="entry name" value="Acyl_CoA_acyltransferase"/>
</dbReference>
<dbReference type="InterPro" id="IPR001048">
    <property type="entry name" value="Asp/Glu/Uridylate_kinase"/>
</dbReference>
<dbReference type="InterPro" id="IPR000182">
    <property type="entry name" value="GNAT_dom"/>
</dbReference>
<dbReference type="InterPro" id="IPR033719">
    <property type="entry name" value="NAGS_kin"/>
</dbReference>
<dbReference type="InterPro" id="IPR010167">
    <property type="entry name" value="NH2A_AcTrfase"/>
</dbReference>
<dbReference type="NCBIfam" id="TIGR01890">
    <property type="entry name" value="N-Ac-Glu-synth"/>
    <property type="match status" value="1"/>
</dbReference>
<dbReference type="NCBIfam" id="NF003641">
    <property type="entry name" value="PRK05279.1"/>
    <property type="match status" value="1"/>
</dbReference>
<dbReference type="PANTHER" id="PTHR30602">
    <property type="entry name" value="AMINO-ACID ACETYLTRANSFERASE"/>
    <property type="match status" value="1"/>
</dbReference>
<dbReference type="PANTHER" id="PTHR30602:SF12">
    <property type="entry name" value="AMINO-ACID ACETYLTRANSFERASE NAGS1, CHLOROPLASTIC-RELATED"/>
    <property type="match status" value="1"/>
</dbReference>
<dbReference type="Pfam" id="PF00696">
    <property type="entry name" value="AA_kinase"/>
    <property type="match status" value="1"/>
</dbReference>
<dbReference type="Pfam" id="PF00583">
    <property type="entry name" value="Acetyltransf_1"/>
    <property type="match status" value="1"/>
</dbReference>
<dbReference type="PIRSF" id="PIRSF000423">
    <property type="entry name" value="ArgA"/>
    <property type="match status" value="1"/>
</dbReference>
<dbReference type="SUPFAM" id="SSF55729">
    <property type="entry name" value="Acyl-CoA N-acyltransferases (Nat)"/>
    <property type="match status" value="1"/>
</dbReference>
<dbReference type="SUPFAM" id="SSF53633">
    <property type="entry name" value="Carbamate kinase-like"/>
    <property type="match status" value="1"/>
</dbReference>
<dbReference type="PROSITE" id="PS51186">
    <property type="entry name" value="GNAT"/>
    <property type="match status" value="1"/>
</dbReference>
<accession>P59292</accession>